<reference key="1">
    <citation type="journal article" date="2005" name="Science">
        <title>The transcriptional landscape of the mammalian genome.</title>
        <authorList>
            <person name="Carninci P."/>
            <person name="Kasukawa T."/>
            <person name="Katayama S."/>
            <person name="Gough J."/>
            <person name="Frith M.C."/>
            <person name="Maeda N."/>
            <person name="Oyama R."/>
            <person name="Ravasi T."/>
            <person name="Lenhard B."/>
            <person name="Wells C."/>
            <person name="Kodzius R."/>
            <person name="Shimokawa K."/>
            <person name="Bajic V.B."/>
            <person name="Brenner S.E."/>
            <person name="Batalov S."/>
            <person name="Forrest A.R."/>
            <person name="Zavolan M."/>
            <person name="Davis M.J."/>
            <person name="Wilming L.G."/>
            <person name="Aidinis V."/>
            <person name="Allen J.E."/>
            <person name="Ambesi-Impiombato A."/>
            <person name="Apweiler R."/>
            <person name="Aturaliya R.N."/>
            <person name="Bailey T.L."/>
            <person name="Bansal M."/>
            <person name="Baxter L."/>
            <person name="Beisel K.W."/>
            <person name="Bersano T."/>
            <person name="Bono H."/>
            <person name="Chalk A.M."/>
            <person name="Chiu K.P."/>
            <person name="Choudhary V."/>
            <person name="Christoffels A."/>
            <person name="Clutterbuck D.R."/>
            <person name="Crowe M.L."/>
            <person name="Dalla E."/>
            <person name="Dalrymple B.P."/>
            <person name="de Bono B."/>
            <person name="Della Gatta G."/>
            <person name="di Bernardo D."/>
            <person name="Down T."/>
            <person name="Engstrom P."/>
            <person name="Fagiolini M."/>
            <person name="Faulkner G."/>
            <person name="Fletcher C.F."/>
            <person name="Fukushima T."/>
            <person name="Furuno M."/>
            <person name="Futaki S."/>
            <person name="Gariboldi M."/>
            <person name="Georgii-Hemming P."/>
            <person name="Gingeras T.R."/>
            <person name="Gojobori T."/>
            <person name="Green R.E."/>
            <person name="Gustincich S."/>
            <person name="Harbers M."/>
            <person name="Hayashi Y."/>
            <person name="Hensch T.K."/>
            <person name="Hirokawa N."/>
            <person name="Hill D."/>
            <person name="Huminiecki L."/>
            <person name="Iacono M."/>
            <person name="Ikeo K."/>
            <person name="Iwama A."/>
            <person name="Ishikawa T."/>
            <person name="Jakt M."/>
            <person name="Kanapin A."/>
            <person name="Katoh M."/>
            <person name="Kawasawa Y."/>
            <person name="Kelso J."/>
            <person name="Kitamura H."/>
            <person name="Kitano H."/>
            <person name="Kollias G."/>
            <person name="Krishnan S.P."/>
            <person name="Kruger A."/>
            <person name="Kummerfeld S.K."/>
            <person name="Kurochkin I.V."/>
            <person name="Lareau L.F."/>
            <person name="Lazarevic D."/>
            <person name="Lipovich L."/>
            <person name="Liu J."/>
            <person name="Liuni S."/>
            <person name="McWilliam S."/>
            <person name="Madan Babu M."/>
            <person name="Madera M."/>
            <person name="Marchionni L."/>
            <person name="Matsuda H."/>
            <person name="Matsuzawa S."/>
            <person name="Miki H."/>
            <person name="Mignone F."/>
            <person name="Miyake S."/>
            <person name="Morris K."/>
            <person name="Mottagui-Tabar S."/>
            <person name="Mulder N."/>
            <person name="Nakano N."/>
            <person name="Nakauchi H."/>
            <person name="Ng P."/>
            <person name="Nilsson R."/>
            <person name="Nishiguchi S."/>
            <person name="Nishikawa S."/>
            <person name="Nori F."/>
            <person name="Ohara O."/>
            <person name="Okazaki Y."/>
            <person name="Orlando V."/>
            <person name="Pang K.C."/>
            <person name="Pavan W.J."/>
            <person name="Pavesi G."/>
            <person name="Pesole G."/>
            <person name="Petrovsky N."/>
            <person name="Piazza S."/>
            <person name="Reed J."/>
            <person name="Reid J.F."/>
            <person name="Ring B.Z."/>
            <person name="Ringwald M."/>
            <person name="Rost B."/>
            <person name="Ruan Y."/>
            <person name="Salzberg S.L."/>
            <person name="Sandelin A."/>
            <person name="Schneider C."/>
            <person name="Schoenbach C."/>
            <person name="Sekiguchi K."/>
            <person name="Semple C.A."/>
            <person name="Seno S."/>
            <person name="Sessa L."/>
            <person name="Sheng Y."/>
            <person name="Shibata Y."/>
            <person name="Shimada H."/>
            <person name="Shimada K."/>
            <person name="Silva D."/>
            <person name="Sinclair B."/>
            <person name="Sperling S."/>
            <person name="Stupka E."/>
            <person name="Sugiura K."/>
            <person name="Sultana R."/>
            <person name="Takenaka Y."/>
            <person name="Taki K."/>
            <person name="Tammoja K."/>
            <person name="Tan S.L."/>
            <person name="Tang S."/>
            <person name="Taylor M.S."/>
            <person name="Tegner J."/>
            <person name="Teichmann S.A."/>
            <person name="Ueda H.R."/>
            <person name="van Nimwegen E."/>
            <person name="Verardo R."/>
            <person name="Wei C.L."/>
            <person name="Yagi K."/>
            <person name="Yamanishi H."/>
            <person name="Zabarovsky E."/>
            <person name="Zhu S."/>
            <person name="Zimmer A."/>
            <person name="Hide W."/>
            <person name="Bult C."/>
            <person name="Grimmond S.M."/>
            <person name="Teasdale R.D."/>
            <person name="Liu E.T."/>
            <person name="Brusic V."/>
            <person name="Quackenbush J."/>
            <person name="Wahlestedt C."/>
            <person name="Mattick J.S."/>
            <person name="Hume D.A."/>
            <person name="Kai C."/>
            <person name="Sasaki D."/>
            <person name="Tomaru Y."/>
            <person name="Fukuda S."/>
            <person name="Kanamori-Katayama M."/>
            <person name="Suzuki M."/>
            <person name="Aoki J."/>
            <person name="Arakawa T."/>
            <person name="Iida J."/>
            <person name="Imamura K."/>
            <person name="Itoh M."/>
            <person name="Kato T."/>
            <person name="Kawaji H."/>
            <person name="Kawagashira N."/>
            <person name="Kawashima T."/>
            <person name="Kojima M."/>
            <person name="Kondo S."/>
            <person name="Konno H."/>
            <person name="Nakano K."/>
            <person name="Ninomiya N."/>
            <person name="Nishio T."/>
            <person name="Okada M."/>
            <person name="Plessy C."/>
            <person name="Shibata K."/>
            <person name="Shiraki T."/>
            <person name="Suzuki S."/>
            <person name="Tagami M."/>
            <person name="Waki K."/>
            <person name="Watahiki A."/>
            <person name="Okamura-Oho Y."/>
            <person name="Suzuki H."/>
            <person name="Kawai J."/>
            <person name="Hayashizaki Y."/>
        </authorList>
    </citation>
    <scope>NUCLEOTIDE SEQUENCE [LARGE SCALE MRNA] (ISOFORM 1)</scope>
    <source>
        <strain>C57BL/6J</strain>
        <tissue>Corpus striatum</tissue>
        <tissue>Thymus</tissue>
    </source>
</reference>
<reference key="2">
    <citation type="journal article" date="2004" name="Genome Res.">
        <title>The status, quality, and expansion of the NIH full-length cDNA project: the Mammalian Gene Collection (MGC).</title>
        <authorList>
            <consortium name="The MGC Project Team"/>
        </authorList>
    </citation>
    <scope>NUCLEOTIDE SEQUENCE [LARGE SCALE MRNA] (ISOFORM 2)</scope>
    <source>
        <strain>Czech II</strain>
        <tissue>Mammary tumor</tissue>
    </source>
</reference>
<dbReference type="EMBL" id="AK041876">
    <property type="protein sequence ID" value="BAC31089.1"/>
    <property type="molecule type" value="mRNA"/>
</dbReference>
<dbReference type="EMBL" id="AK047811">
    <property type="protein sequence ID" value="BAC33161.1"/>
    <property type="molecule type" value="mRNA"/>
</dbReference>
<dbReference type="EMBL" id="BC029549">
    <property type="protein sequence ID" value="AAH29549.1"/>
    <property type="molecule type" value="mRNA"/>
</dbReference>
<dbReference type="CCDS" id="CCDS19064.2">
    <molecule id="Q8K2X2-1"/>
</dbReference>
<dbReference type="RefSeq" id="NP_766579.3">
    <molecule id="Q8K2X2-1"/>
    <property type="nucleotide sequence ID" value="NM_172991.4"/>
</dbReference>
<dbReference type="SMR" id="Q8K2X2"/>
<dbReference type="FunCoup" id="Q8K2X2">
    <property type="interactions" value="2259"/>
</dbReference>
<dbReference type="STRING" id="10090.ENSMUSP00000040952"/>
<dbReference type="iPTMnet" id="Q8K2X2"/>
<dbReference type="PhosphoSitePlus" id="Q8K2X2"/>
<dbReference type="PaxDb" id="10090-ENSMUSP00000040952"/>
<dbReference type="ProteomicsDB" id="255004">
    <molecule id="Q8K2X2-1"/>
</dbReference>
<dbReference type="DNASU" id="269623"/>
<dbReference type="Ensembl" id="ENSMUST00000042753.14">
    <molecule id="Q8K2X2-1"/>
    <property type="protein sequence ID" value="ENSMUSP00000040952.9"/>
    <property type="gene ID" value="ENSMUSG00000040302.18"/>
</dbReference>
<dbReference type="Ensembl" id="ENSMUST00000121877.3">
    <molecule id="Q8K2X2-2"/>
    <property type="protein sequence ID" value="ENSMUSP00000112547.4"/>
    <property type="gene ID" value="ENSMUSG00000040302.18"/>
</dbReference>
<dbReference type="GeneID" id="269623"/>
<dbReference type="KEGG" id="mmu:269623"/>
<dbReference type="AGR" id="MGI:2442653"/>
<dbReference type="CTD" id="84060"/>
<dbReference type="MGI" id="MGI:2442653">
    <property type="gene designation" value="Rbm48"/>
</dbReference>
<dbReference type="eggNOG" id="ENOG502QSNB">
    <property type="taxonomic scope" value="Eukaryota"/>
</dbReference>
<dbReference type="GeneTree" id="ENSGT00390000004541"/>
<dbReference type="InParanoid" id="Q8K2X2"/>
<dbReference type="OrthoDB" id="78358at2759"/>
<dbReference type="PhylomeDB" id="Q8K2X2"/>
<dbReference type="BioGRID-ORCS" id="269623">
    <property type="hits" value="22 hits in 76 CRISPR screens"/>
</dbReference>
<dbReference type="ChiTaRS" id="Rbm48">
    <property type="organism name" value="mouse"/>
</dbReference>
<dbReference type="PRO" id="PR:Q8K2X2"/>
<dbReference type="Proteomes" id="UP000000589">
    <property type="component" value="Chromosome 5"/>
</dbReference>
<dbReference type="RNAct" id="Q8K2X2">
    <property type="molecule type" value="protein"/>
</dbReference>
<dbReference type="GO" id="GO:0005654">
    <property type="term" value="C:nucleoplasm"/>
    <property type="evidence" value="ECO:0007669"/>
    <property type="project" value="Ensembl"/>
</dbReference>
<dbReference type="GO" id="GO:0005681">
    <property type="term" value="C:spliceosomal complex"/>
    <property type="evidence" value="ECO:0007669"/>
    <property type="project" value="UniProtKB-KW"/>
</dbReference>
<dbReference type="GO" id="GO:0003723">
    <property type="term" value="F:RNA binding"/>
    <property type="evidence" value="ECO:0007669"/>
    <property type="project" value="UniProtKB-KW"/>
</dbReference>
<dbReference type="GO" id="GO:0006397">
    <property type="term" value="P:mRNA processing"/>
    <property type="evidence" value="ECO:0007669"/>
    <property type="project" value="UniProtKB-KW"/>
</dbReference>
<dbReference type="GO" id="GO:0008380">
    <property type="term" value="P:RNA splicing"/>
    <property type="evidence" value="ECO:0007669"/>
    <property type="project" value="UniProtKB-KW"/>
</dbReference>
<dbReference type="CDD" id="cd12442">
    <property type="entry name" value="RRM_RBM48"/>
    <property type="match status" value="1"/>
</dbReference>
<dbReference type="FunFam" id="3.30.70.330:FF:000424">
    <property type="entry name" value="RNA-binding protein 48 isoform X4"/>
    <property type="match status" value="1"/>
</dbReference>
<dbReference type="InterPro" id="IPR035979">
    <property type="entry name" value="RBD_domain_sf"/>
</dbReference>
<dbReference type="InterPro" id="IPR039599">
    <property type="entry name" value="RBM48"/>
</dbReference>
<dbReference type="InterPro" id="IPR034264">
    <property type="entry name" value="RBM48_RRM"/>
</dbReference>
<dbReference type="PANTHER" id="PTHR20957">
    <property type="entry name" value="RNA-BINDING PROTEIN 48"/>
    <property type="match status" value="1"/>
</dbReference>
<dbReference type="PANTHER" id="PTHR20957:SF0">
    <property type="entry name" value="RNA-BINDING PROTEIN 48"/>
    <property type="match status" value="1"/>
</dbReference>
<dbReference type="SUPFAM" id="SSF54928">
    <property type="entry name" value="RNA-binding domain, RBD"/>
    <property type="match status" value="1"/>
</dbReference>
<organism>
    <name type="scientific">Mus musculus</name>
    <name type="common">Mouse</name>
    <dbReference type="NCBI Taxonomy" id="10090"/>
    <lineage>
        <taxon>Eukaryota</taxon>
        <taxon>Metazoa</taxon>
        <taxon>Chordata</taxon>
        <taxon>Craniata</taxon>
        <taxon>Vertebrata</taxon>
        <taxon>Euteleostomi</taxon>
        <taxon>Mammalia</taxon>
        <taxon>Eutheria</taxon>
        <taxon>Euarchontoglires</taxon>
        <taxon>Glires</taxon>
        <taxon>Rodentia</taxon>
        <taxon>Myomorpha</taxon>
        <taxon>Muroidea</taxon>
        <taxon>Muridae</taxon>
        <taxon>Murinae</taxon>
        <taxon>Mus</taxon>
        <taxon>Mus</taxon>
    </lineage>
</organism>
<feature type="chain" id="PRO_0000321515" description="RNA-binding protein 48">
    <location>
        <begin position="1"/>
        <end position="371"/>
    </location>
</feature>
<feature type="domain" description="RRM">
    <location>
        <begin position="46"/>
        <end position="124"/>
    </location>
</feature>
<feature type="region of interest" description="Disordered" evidence="2">
    <location>
        <begin position="157"/>
        <end position="191"/>
    </location>
</feature>
<feature type="region of interest" description="Disordered" evidence="2">
    <location>
        <begin position="348"/>
        <end position="371"/>
    </location>
</feature>
<feature type="compositionally biased region" description="Basic and acidic residues" evidence="2">
    <location>
        <begin position="158"/>
        <end position="170"/>
    </location>
</feature>
<feature type="splice variant" id="VSP_031785" description="In isoform 2." evidence="3">
    <location>
        <begin position="102"/>
        <end position="371"/>
    </location>
</feature>
<feature type="sequence conflict" description="In Ref. 1; BAC31089." evidence="4" ref="1">
    <original>R</original>
    <variation>K</variation>
    <location>
        <position position="240"/>
    </location>
</feature>
<sequence>MASSDGKPGGVFDHHVQTAVCDSRAKYREGRRPRAVKVYTINLESQYLLIQGVPAVGAMKELVERFALYGAIEQYNALDEYPAEDFTEVYLIKFVKLQSARVAKKKMDEQSFFGGLLHVCYAPEFETVEETRKKLQERKAYITRVTKNQDCYMAKKKPVPEQKGTKDSRQGFHPPMPGFGTAALNTSPESPPENSSSCLPYSCEFPLSCFASKSTCSRGEHVDRVSDSCNSARNHGELSRHRDHSAFSPKLQMNTYKNSVPCSSVQEAIATSQAVGRFMPRTTQLQERKRRRDCDRELGTLLETHTSSNEVLIGPKLPGIPTVDLQDDSLNTTATLIRRKLKEVISSVPKPPEDNIKDVCTSHPGKQRRRI</sequence>
<gene>
    <name type="primary">Rbm48</name>
</gene>
<accession>Q8K2X2</accession>
<accession>Q8BQM1</accession>
<accession>Q8C9L5</accession>
<evidence type="ECO:0000250" key="1">
    <source>
        <dbReference type="UniProtKB" id="Q5RL73"/>
    </source>
</evidence>
<evidence type="ECO:0000256" key="2">
    <source>
        <dbReference type="SAM" id="MobiDB-lite"/>
    </source>
</evidence>
<evidence type="ECO:0000303" key="3">
    <source>
    </source>
</evidence>
<evidence type="ECO:0000305" key="4"/>
<keyword id="KW-0025">Alternative splicing</keyword>
<keyword id="KW-0507">mRNA processing</keyword>
<keyword id="KW-0508">mRNA splicing</keyword>
<keyword id="KW-1185">Reference proteome</keyword>
<keyword id="KW-0694">RNA-binding</keyword>
<keyword id="KW-0747">Spliceosome</keyword>
<comment type="function">
    <text evidence="1">As a component of the minor spliceosome, involved in the splicing of U12-type introns in pre-mRNAs.</text>
</comment>
<comment type="subunit">
    <text evidence="1">Component of the minor spliceosome. Within this complex, interacts with ARMC7 and PRPF8/PRP8.</text>
</comment>
<comment type="alternative products">
    <event type="alternative splicing"/>
    <isoform>
        <id>Q8K2X2-1</id>
        <name>1</name>
        <sequence type="displayed"/>
    </isoform>
    <isoform>
        <id>Q8K2X2-2</id>
        <name>2</name>
        <sequence type="described" ref="VSP_031785"/>
    </isoform>
</comment>
<comment type="similarity">
    <text evidence="4">Belongs to the RBM48 family.</text>
</comment>
<protein>
    <recommendedName>
        <fullName>RNA-binding protein 48</fullName>
    </recommendedName>
</protein>
<proteinExistence type="evidence at transcript level"/>
<name>RBM48_MOUSE</name>